<keyword id="KW-0687">Ribonucleoprotein</keyword>
<keyword id="KW-0689">Ribosomal protein</keyword>
<keyword id="KW-0694">RNA-binding</keyword>
<keyword id="KW-0699">rRNA-binding</keyword>
<keyword id="KW-0820">tRNA-binding</keyword>
<sequence>MSNPMRNPKVEKVVVHMGVGESGQHLVDAEGILETITGQTVVRSYAKRTLPAFTIKKGEPIGCKVTLRGEAAEGFLETSLGIVEKRLNESQFDIFGNVSFGVEEHTDYPGMRYDPNIGIFGMDITVVVNRPGYRVSKRRIAKRKIPTSHKITKEDTISFFKDKYAVEVE</sequence>
<comment type="function">
    <text evidence="1">This is one of the proteins that bind and probably mediate the attachment of the 5S RNA into the large ribosomal subunit, where it forms part of the central protuberance. In the 70S ribosome it contacts protein S13 of the 30S subunit (bridge B1b), connecting the 2 subunits; this bridge is implicated in subunit movement. May contact the P site tRNA; the 5S rRNA and some of its associated proteins might help stabilize positioning of ribosome-bound tRNAs.</text>
</comment>
<comment type="subunit">
    <text evidence="1">Part of the 50S ribosomal subunit; contacts the 5S rRNA and probably tRNA. Forms a bridge to the 30S subunit in the 70S ribosome.</text>
</comment>
<comment type="similarity">
    <text evidence="1">Belongs to the universal ribosomal protein uL5 family.</text>
</comment>
<feature type="chain" id="PRO_1000052769" description="Large ribosomal subunit protein uL5">
    <location>
        <begin position="1"/>
        <end position="169"/>
    </location>
</feature>
<dbReference type="EMBL" id="CP000300">
    <property type="protein sequence ID" value="ABE51038.1"/>
    <property type="molecule type" value="Genomic_DNA"/>
</dbReference>
<dbReference type="SMR" id="Q12ZT8"/>
<dbReference type="STRING" id="259564.Mbur_0014"/>
<dbReference type="KEGG" id="mbu:Mbur_0014"/>
<dbReference type="HOGENOM" id="CLU_061015_3_0_2"/>
<dbReference type="Proteomes" id="UP000001979">
    <property type="component" value="Chromosome"/>
</dbReference>
<dbReference type="GO" id="GO:1990904">
    <property type="term" value="C:ribonucleoprotein complex"/>
    <property type="evidence" value="ECO:0007669"/>
    <property type="project" value="UniProtKB-KW"/>
</dbReference>
<dbReference type="GO" id="GO:0005840">
    <property type="term" value="C:ribosome"/>
    <property type="evidence" value="ECO:0007669"/>
    <property type="project" value="UniProtKB-KW"/>
</dbReference>
<dbReference type="GO" id="GO:0019843">
    <property type="term" value="F:rRNA binding"/>
    <property type="evidence" value="ECO:0007669"/>
    <property type="project" value="UniProtKB-UniRule"/>
</dbReference>
<dbReference type="GO" id="GO:0003735">
    <property type="term" value="F:structural constituent of ribosome"/>
    <property type="evidence" value="ECO:0007669"/>
    <property type="project" value="InterPro"/>
</dbReference>
<dbReference type="GO" id="GO:0000049">
    <property type="term" value="F:tRNA binding"/>
    <property type="evidence" value="ECO:0007669"/>
    <property type="project" value="UniProtKB-UniRule"/>
</dbReference>
<dbReference type="GO" id="GO:0006412">
    <property type="term" value="P:translation"/>
    <property type="evidence" value="ECO:0007669"/>
    <property type="project" value="UniProtKB-UniRule"/>
</dbReference>
<dbReference type="FunFam" id="3.30.1440.10:FF:000002">
    <property type="entry name" value="60S ribosomal protein L11"/>
    <property type="match status" value="1"/>
</dbReference>
<dbReference type="Gene3D" id="3.30.1440.10">
    <property type="match status" value="1"/>
</dbReference>
<dbReference type="HAMAP" id="MF_01333_A">
    <property type="entry name" value="Ribosomal_uL5_A"/>
    <property type="match status" value="1"/>
</dbReference>
<dbReference type="InterPro" id="IPR002132">
    <property type="entry name" value="Ribosomal_uL5"/>
</dbReference>
<dbReference type="InterPro" id="IPR022804">
    <property type="entry name" value="Ribosomal_uL5_arc"/>
</dbReference>
<dbReference type="InterPro" id="IPR031309">
    <property type="entry name" value="Ribosomal_uL5_C"/>
</dbReference>
<dbReference type="InterPro" id="IPR020929">
    <property type="entry name" value="Ribosomal_uL5_CS"/>
</dbReference>
<dbReference type="InterPro" id="IPR022803">
    <property type="entry name" value="Ribosomal_uL5_dom_sf"/>
</dbReference>
<dbReference type="InterPro" id="IPR031310">
    <property type="entry name" value="Ribosomal_uL5_N"/>
</dbReference>
<dbReference type="NCBIfam" id="NF003258">
    <property type="entry name" value="PRK04219.1"/>
    <property type="match status" value="1"/>
</dbReference>
<dbReference type="PANTHER" id="PTHR11994">
    <property type="entry name" value="60S RIBOSOMAL PROTEIN L11-RELATED"/>
    <property type="match status" value="1"/>
</dbReference>
<dbReference type="Pfam" id="PF00281">
    <property type="entry name" value="Ribosomal_L5"/>
    <property type="match status" value="1"/>
</dbReference>
<dbReference type="Pfam" id="PF00673">
    <property type="entry name" value="Ribosomal_L5_C"/>
    <property type="match status" value="1"/>
</dbReference>
<dbReference type="PIRSF" id="PIRSF002161">
    <property type="entry name" value="Ribosomal_L5"/>
    <property type="match status" value="1"/>
</dbReference>
<dbReference type="SUPFAM" id="SSF55282">
    <property type="entry name" value="RL5-like"/>
    <property type="match status" value="1"/>
</dbReference>
<dbReference type="PROSITE" id="PS00358">
    <property type="entry name" value="RIBOSOMAL_L5"/>
    <property type="match status" value="1"/>
</dbReference>
<evidence type="ECO:0000255" key="1">
    <source>
        <dbReference type="HAMAP-Rule" id="MF_01333"/>
    </source>
</evidence>
<evidence type="ECO:0000305" key="2"/>
<protein>
    <recommendedName>
        <fullName evidence="1">Large ribosomal subunit protein uL5</fullName>
    </recommendedName>
    <alternativeName>
        <fullName evidence="2">50S ribosomal protein L5</fullName>
    </alternativeName>
</protein>
<gene>
    <name evidence="1" type="primary">rpl5</name>
    <name type="ordered locus">Mbur_0014</name>
</gene>
<organism>
    <name type="scientific">Methanococcoides burtonii (strain DSM 6242 / NBRC 107633 / OCM 468 / ACE-M)</name>
    <dbReference type="NCBI Taxonomy" id="259564"/>
    <lineage>
        <taxon>Archaea</taxon>
        <taxon>Methanobacteriati</taxon>
        <taxon>Methanobacteriota</taxon>
        <taxon>Stenosarchaea group</taxon>
        <taxon>Methanomicrobia</taxon>
        <taxon>Methanosarcinales</taxon>
        <taxon>Methanosarcinaceae</taxon>
        <taxon>Methanococcoides</taxon>
    </lineage>
</organism>
<proteinExistence type="inferred from homology"/>
<name>RL5_METBU</name>
<reference key="1">
    <citation type="journal article" date="2009" name="ISME J.">
        <title>The genome sequence of the psychrophilic archaeon, Methanococcoides burtonii: the role of genome evolution in cold adaptation.</title>
        <authorList>
            <person name="Allen M.A."/>
            <person name="Lauro F.M."/>
            <person name="Williams T.J."/>
            <person name="Burg D."/>
            <person name="Siddiqui K.S."/>
            <person name="De Francisci D."/>
            <person name="Chong K.W."/>
            <person name="Pilak O."/>
            <person name="Chew H.H."/>
            <person name="De Maere M.Z."/>
            <person name="Ting L."/>
            <person name="Katrib M."/>
            <person name="Ng C."/>
            <person name="Sowers K.R."/>
            <person name="Galperin M.Y."/>
            <person name="Anderson I.J."/>
            <person name="Ivanova N."/>
            <person name="Dalin E."/>
            <person name="Martinez M."/>
            <person name="Lapidus A."/>
            <person name="Hauser L."/>
            <person name="Land M."/>
            <person name="Thomas T."/>
            <person name="Cavicchioli R."/>
        </authorList>
    </citation>
    <scope>NUCLEOTIDE SEQUENCE [LARGE SCALE GENOMIC DNA]</scope>
    <source>
        <strain>DSM 6242 / NBRC 107633 / OCM 468 / ACE-M</strain>
    </source>
</reference>
<accession>Q12ZT8</accession>